<evidence type="ECO:0000255" key="1">
    <source>
        <dbReference type="HAMAP-Rule" id="MF_00182"/>
    </source>
</evidence>
<organism>
    <name type="scientific">Sulfurovum sp. (strain NBC37-1)</name>
    <dbReference type="NCBI Taxonomy" id="387093"/>
    <lineage>
        <taxon>Bacteria</taxon>
        <taxon>Pseudomonadati</taxon>
        <taxon>Campylobacterota</taxon>
        <taxon>Epsilonproteobacteria</taxon>
        <taxon>Campylobacterales</taxon>
        <taxon>Sulfurovaceae</taxon>
        <taxon>Sulfurovum</taxon>
    </lineage>
</organism>
<keyword id="KW-0648">Protein biosynthesis</keyword>
<keyword id="KW-0808">Transferase</keyword>
<protein>
    <recommendedName>
        <fullName evidence="1">Methionyl-tRNA formyltransferase</fullName>
        <ecNumber evidence="1">2.1.2.9</ecNumber>
    </recommendedName>
</protein>
<accession>A6QB68</accession>
<gene>
    <name evidence="1" type="primary">fmt</name>
    <name type="ordered locus">SUN_1780</name>
</gene>
<proteinExistence type="inferred from homology"/>
<reference key="1">
    <citation type="journal article" date="2007" name="Proc. Natl. Acad. Sci. U.S.A.">
        <title>Deep-sea vent epsilon-proteobacterial genomes provide insights into emergence of pathogens.</title>
        <authorList>
            <person name="Nakagawa S."/>
            <person name="Takaki Y."/>
            <person name="Shimamura S."/>
            <person name="Reysenbach A.-L."/>
            <person name="Takai K."/>
            <person name="Horikoshi K."/>
        </authorList>
    </citation>
    <scope>NUCLEOTIDE SEQUENCE [LARGE SCALE GENOMIC DNA]</scope>
    <source>
        <strain>NBC37-1</strain>
    </source>
</reference>
<feature type="chain" id="PRO_1000203877" description="Methionyl-tRNA formyltransferase">
    <location>
        <begin position="1"/>
        <end position="304"/>
    </location>
</feature>
<feature type="binding site" evidence="1">
    <location>
        <begin position="110"/>
        <end position="113"/>
    </location>
    <ligand>
        <name>(6S)-5,6,7,8-tetrahydrofolate</name>
        <dbReference type="ChEBI" id="CHEBI:57453"/>
    </ligand>
</feature>
<name>FMT_SULNB</name>
<sequence>MKYKIIYMGTPHYAREILQTLVEAEDMDVSLVLTQPDRPVGRKKVLTPPPVKVLAQEHGIDVLQPNRLSEEGIKEAIKSQNPDFIIVAAFGQILPQSILDIAPCINLHASLLPQYRGASPVQQSLLNGDEKTGVTSMLMEAGLDTGPMLEKIEFVIPKEMRLFALMEQLTRDACMLTLSTVRNFETITPEAQDESQASLCKKIKKSDGQIDFEDAEIIYNKYRAFEGWPGIFAVNGTKFDEVILLESGTTHTAGEILSFDEESVLVGCSRGALKIGILQPASKKVMTARAYCVGRGKKVGDNIL</sequence>
<dbReference type="EC" id="2.1.2.9" evidence="1"/>
<dbReference type="EMBL" id="AP009179">
    <property type="protein sequence ID" value="BAF72727.1"/>
    <property type="molecule type" value="Genomic_DNA"/>
</dbReference>
<dbReference type="RefSeq" id="WP_012083537.1">
    <property type="nucleotide sequence ID" value="NC_009663.1"/>
</dbReference>
<dbReference type="SMR" id="A6QB68"/>
<dbReference type="STRING" id="387093.SUN_1780"/>
<dbReference type="KEGG" id="sun:SUN_1780"/>
<dbReference type="eggNOG" id="COG0223">
    <property type="taxonomic scope" value="Bacteria"/>
</dbReference>
<dbReference type="HOGENOM" id="CLU_033347_1_1_7"/>
<dbReference type="OrthoDB" id="9802815at2"/>
<dbReference type="Proteomes" id="UP000006378">
    <property type="component" value="Chromosome"/>
</dbReference>
<dbReference type="GO" id="GO:0005829">
    <property type="term" value="C:cytosol"/>
    <property type="evidence" value="ECO:0007669"/>
    <property type="project" value="TreeGrafter"/>
</dbReference>
<dbReference type="GO" id="GO:0004479">
    <property type="term" value="F:methionyl-tRNA formyltransferase activity"/>
    <property type="evidence" value="ECO:0007669"/>
    <property type="project" value="UniProtKB-UniRule"/>
</dbReference>
<dbReference type="CDD" id="cd08646">
    <property type="entry name" value="FMT_core_Met-tRNA-FMT_N"/>
    <property type="match status" value="1"/>
</dbReference>
<dbReference type="CDD" id="cd08704">
    <property type="entry name" value="Met_tRNA_FMT_C"/>
    <property type="match status" value="1"/>
</dbReference>
<dbReference type="Gene3D" id="3.40.50.12230">
    <property type="match status" value="1"/>
</dbReference>
<dbReference type="HAMAP" id="MF_00182">
    <property type="entry name" value="Formyl_trans"/>
    <property type="match status" value="1"/>
</dbReference>
<dbReference type="InterPro" id="IPR005794">
    <property type="entry name" value="Fmt"/>
</dbReference>
<dbReference type="InterPro" id="IPR005793">
    <property type="entry name" value="Formyl_trans_C"/>
</dbReference>
<dbReference type="InterPro" id="IPR002376">
    <property type="entry name" value="Formyl_transf_N"/>
</dbReference>
<dbReference type="InterPro" id="IPR036477">
    <property type="entry name" value="Formyl_transf_N_sf"/>
</dbReference>
<dbReference type="InterPro" id="IPR011034">
    <property type="entry name" value="Formyl_transferase-like_C_sf"/>
</dbReference>
<dbReference type="InterPro" id="IPR044135">
    <property type="entry name" value="Met-tRNA-FMT_C"/>
</dbReference>
<dbReference type="InterPro" id="IPR041711">
    <property type="entry name" value="Met-tRNA-FMT_N"/>
</dbReference>
<dbReference type="NCBIfam" id="TIGR00460">
    <property type="entry name" value="fmt"/>
    <property type="match status" value="1"/>
</dbReference>
<dbReference type="PANTHER" id="PTHR11138">
    <property type="entry name" value="METHIONYL-TRNA FORMYLTRANSFERASE"/>
    <property type="match status" value="1"/>
</dbReference>
<dbReference type="PANTHER" id="PTHR11138:SF5">
    <property type="entry name" value="METHIONYL-TRNA FORMYLTRANSFERASE, MITOCHONDRIAL"/>
    <property type="match status" value="1"/>
</dbReference>
<dbReference type="Pfam" id="PF02911">
    <property type="entry name" value="Formyl_trans_C"/>
    <property type="match status" value="1"/>
</dbReference>
<dbReference type="Pfam" id="PF00551">
    <property type="entry name" value="Formyl_trans_N"/>
    <property type="match status" value="1"/>
</dbReference>
<dbReference type="SUPFAM" id="SSF50486">
    <property type="entry name" value="FMT C-terminal domain-like"/>
    <property type="match status" value="1"/>
</dbReference>
<dbReference type="SUPFAM" id="SSF53328">
    <property type="entry name" value="Formyltransferase"/>
    <property type="match status" value="1"/>
</dbReference>
<comment type="function">
    <text evidence="1">Attaches a formyl group to the free amino group of methionyl-tRNA(fMet). The formyl group appears to play a dual role in the initiator identity of N-formylmethionyl-tRNA by promoting its recognition by IF2 and preventing the misappropriation of this tRNA by the elongation apparatus.</text>
</comment>
<comment type="catalytic activity">
    <reaction evidence="1">
        <text>L-methionyl-tRNA(fMet) + (6R)-10-formyltetrahydrofolate = N-formyl-L-methionyl-tRNA(fMet) + (6S)-5,6,7,8-tetrahydrofolate + H(+)</text>
        <dbReference type="Rhea" id="RHEA:24380"/>
        <dbReference type="Rhea" id="RHEA-COMP:9952"/>
        <dbReference type="Rhea" id="RHEA-COMP:9953"/>
        <dbReference type="ChEBI" id="CHEBI:15378"/>
        <dbReference type="ChEBI" id="CHEBI:57453"/>
        <dbReference type="ChEBI" id="CHEBI:78530"/>
        <dbReference type="ChEBI" id="CHEBI:78844"/>
        <dbReference type="ChEBI" id="CHEBI:195366"/>
        <dbReference type="EC" id="2.1.2.9"/>
    </reaction>
</comment>
<comment type="similarity">
    <text evidence="1">Belongs to the Fmt family.</text>
</comment>